<feature type="chain" id="PRO_0000322337" description="Small ribosomal subunit protein uS4">
    <location>
        <begin position="1"/>
        <end position="200"/>
    </location>
</feature>
<feature type="domain" description="S4 RNA-binding" evidence="1">
    <location>
        <begin position="92"/>
        <end position="155"/>
    </location>
</feature>
<organism>
    <name type="scientific">Staphylococcus aureus (strain Mu3 / ATCC 700698)</name>
    <dbReference type="NCBI Taxonomy" id="418127"/>
    <lineage>
        <taxon>Bacteria</taxon>
        <taxon>Bacillati</taxon>
        <taxon>Bacillota</taxon>
        <taxon>Bacilli</taxon>
        <taxon>Bacillales</taxon>
        <taxon>Staphylococcaceae</taxon>
        <taxon>Staphylococcus</taxon>
    </lineage>
</organism>
<protein>
    <recommendedName>
        <fullName evidence="1">Small ribosomal subunit protein uS4</fullName>
    </recommendedName>
    <alternativeName>
        <fullName evidence="2">30S ribosomal protein S4</fullName>
    </alternativeName>
</protein>
<proteinExistence type="inferred from homology"/>
<name>RS4_STAA1</name>
<keyword id="KW-0687">Ribonucleoprotein</keyword>
<keyword id="KW-0689">Ribosomal protein</keyword>
<keyword id="KW-0694">RNA-binding</keyword>
<keyword id="KW-0699">rRNA-binding</keyword>
<gene>
    <name evidence="1" type="primary">rpsD</name>
    <name type="ordered locus">SAHV_1705</name>
</gene>
<evidence type="ECO:0000255" key="1">
    <source>
        <dbReference type="HAMAP-Rule" id="MF_01306"/>
    </source>
</evidence>
<evidence type="ECO:0000305" key="2"/>
<sequence>MARFRGSNWKKSRRLGISLSGTGKELEKRPYAPGQHGPNQRKKLSEYGLQLREKQKLRYLYGMTERQFRNTFDIAGKKFGVHGENFMILLASRLDAVVYSLGLARTRRQARQLVNHGHILVDGKRVDIPSYSVKPGQTISVREKSQKLNIIVESVEINNFVPEYLNFDADSLTGTFVRLPERSELPAEINEQLIVEYYSR</sequence>
<comment type="function">
    <text evidence="1">One of the primary rRNA binding proteins, it binds directly to 16S rRNA where it nucleates assembly of the body of the 30S subunit.</text>
</comment>
<comment type="function">
    <text evidence="1">With S5 and S12 plays an important role in translational accuracy.</text>
</comment>
<comment type="subunit">
    <text evidence="1">Part of the 30S ribosomal subunit. Contacts protein S5. The interaction surface between S4 and S5 is involved in control of translational fidelity.</text>
</comment>
<comment type="similarity">
    <text evidence="1">Belongs to the universal ribosomal protein uS4 family.</text>
</comment>
<accession>A7X3F0</accession>
<reference key="1">
    <citation type="journal article" date="2008" name="Antimicrob. Agents Chemother.">
        <title>Mutated response regulator graR is responsible for phenotypic conversion of Staphylococcus aureus from heterogeneous vancomycin-intermediate resistance to vancomycin-intermediate resistance.</title>
        <authorList>
            <person name="Neoh H.-M."/>
            <person name="Cui L."/>
            <person name="Yuzawa H."/>
            <person name="Takeuchi F."/>
            <person name="Matsuo M."/>
            <person name="Hiramatsu K."/>
        </authorList>
    </citation>
    <scope>NUCLEOTIDE SEQUENCE [LARGE SCALE GENOMIC DNA]</scope>
    <source>
        <strain>Mu3 / ATCC 700698</strain>
    </source>
</reference>
<dbReference type="EMBL" id="AP009324">
    <property type="protein sequence ID" value="BAF78588.1"/>
    <property type="molecule type" value="Genomic_DNA"/>
</dbReference>
<dbReference type="RefSeq" id="WP_000090512.1">
    <property type="nucleotide sequence ID" value="NZ_CTYB01000008.1"/>
</dbReference>
<dbReference type="SMR" id="A7X3F0"/>
<dbReference type="KEGG" id="saw:SAHV_1705"/>
<dbReference type="HOGENOM" id="CLU_092403_0_1_9"/>
<dbReference type="GO" id="GO:0015935">
    <property type="term" value="C:small ribosomal subunit"/>
    <property type="evidence" value="ECO:0007669"/>
    <property type="project" value="InterPro"/>
</dbReference>
<dbReference type="GO" id="GO:0019843">
    <property type="term" value="F:rRNA binding"/>
    <property type="evidence" value="ECO:0007669"/>
    <property type="project" value="UniProtKB-UniRule"/>
</dbReference>
<dbReference type="GO" id="GO:0003735">
    <property type="term" value="F:structural constituent of ribosome"/>
    <property type="evidence" value="ECO:0007669"/>
    <property type="project" value="InterPro"/>
</dbReference>
<dbReference type="GO" id="GO:0042274">
    <property type="term" value="P:ribosomal small subunit biogenesis"/>
    <property type="evidence" value="ECO:0007669"/>
    <property type="project" value="TreeGrafter"/>
</dbReference>
<dbReference type="GO" id="GO:0006412">
    <property type="term" value="P:translation"/>
    <property type="evidence" value="ECO:0007669"/>
    <property type="project" value="UniProtKB-UniRule"/>
</dbReference>
<dbReference type="CDD" id="cd00165">
    <property type="entry name" value="S4"/>
    <property type="match status" value="1"/>
</dbReference>
<dbReference type="FunFam" id="1.10.1050.10:FF:000001">
    <property type="entry name" value="30S ribosomal protein S4"/>
    <property type="match status" value="1"/>
</dbReference>
<dbReference type="FunFam" id="3.10.290.10:FF:000001">
    <property type="entry name" value="30S ribosomal protein S4"/>
    <property type="match status" value="1"/>
</dbReference>
<dbReference type="Gene3D" id="1.10.1050.10">
    <property type="entry name" value="Ribosomal Protein S4 Delta 41, Chain A, domain 1"/>
    <property type="match status" value="1"/>
</dbReference>
<dbReference type="Gene3D" id="3.10.290.10">
    <property type="entry name" value="RNA-binding S4 domain"/>
    <property type="match status" value="1"/>
</dbReference>
<dbReference type="HAMAP" id="MF_01306_B">
    <property type="entry name" value="Ribosomal_uS4_B"/>
    <property type="match status" value="1"/>
</dbReference>
<dbReference type="InterPro" id="IPR022801">
    <property type="entry name" value="Ribosomal_uS4"/>
</dbReference>
<dbReference type="InterPro" id="IPR005709">
    <property type="entry name" value="Ribosomal_uS4_bac-type"/>
</dbReference>
<dbReference type="InterPro" id="IPR018079">
    <property type="entry name" value="Ribosomal_uS4_CS"/>
</dbReference>
<dbReference type="InterPro" id="IPR001912">
    <property type="entry name" value="Ribosomal_uS4_N"/>
</dbReference>
<dbReference type="InterPro" id="IPR002942">
    <property type="entry name" value="S4_RNA-bd"/>
</dbReference>
<dbReference type="InterPro" id="IPR036986">
    <property type="entry name" value="S4_RNA-bd_sf"/>
</dbReference>
<dbReference type="NCBIfam" id="NF003717">
    <property type="entry name" value="PRK05327.1"/>
    <property type="match status" value="1"/>
</dbReference>
<dbReference type="NCBIfam" id="TIGR01017">
    <property type="entry name" value="rpsD_bact"/>
    <property type="match status" value="1"/>
</dbReference>
<dbReference type="PANTHER" id="PTHR11831">
    <property type="entry name" value="30S 40S RIBOSOMAL PROTEIN"/>
    <property type="match status" value="1"/>
</dbReference>
<dbReference type="PANTHER" id="PTHR11831:SF4">
    <property type="entry name" value="SMALL RIBOSOMAL SUBUNIT PROTEIN US4M"/>
    <property type="match status" value="1"/>
</dbReference>
<dbReference type="Pfam" id="PF00163">
    <property type="entry name" value="Ribosomal_S4"/>
    <property type="match status" value="1"/>
</dbReference>
<dbReference type="Pfam" id="PF01479">
    <property type="entry name" value="S4"/>
    <property type="match status" value="1"/>
</dbReference>
<dbReference type="SMART" id="SM01390">
    <property type="entry name" value="Ribosomal_S4"/>
    <property type="match status" value="1"/>
</dbReference>
<dbReference type="SMART" id="SM00363">
    <property type="entry name" value="S4"/>
    <property type="match status" value="1"/>
</dbReference>
<dbReference type="SUPFAM" id="SSF55174">
    <property type="entry name" value="Alpha-L RNA-binding motif"/>
    <property type="match status" value="1"/>
</dbReference>
<dbReference type="PROSITE" id="PS00632">
    <property type="entry name" value="RIBOSOMAL_S4"/>
    <property type="match status" value="1"/>
</dbReference>
<dbReference type="PROSITE" id="PS50889">
    <property type="entry name" value="S4"/>
    <property type="match status" value="1"/>
</dbReference>